<accession>B8ZUC1</accession>
<gene>
    <name evidence="1" type="primary">glmM</name>
    <name type="ordered locus">MLBr00366</name>
</gene>
<organism>
    <name type="scientific">Mycobacterium leprae (strain Br4923)</name>
    <dbReference type="NCBI Taxonomy" id="561304"/>
    <lineage>
        <taxon>Bacteria</taxon>
        <taxon>Bacillati</taxon>
        <taxon>Actinomycetota</taxon>
        <taxon>Actinomycetes</taxon>
        <taxon>Mycobacteriales</taxon>
        <taxon>Mycobacteriaceae</taxon>
        <taxon>Mycobacterium</taxon>
    </lineage>
</organism>
<name>GLMM_MYCLB</name>
<evidence type="ECO:0000255" key="1">
    <source>
        <dbReference type="HAMAP-Rule" id="MF_01554"/>
    </source>
</evidence>
<reference key="1">
    <citation type="journal article" date="2009" name="Nat. Genet.">
        <title>Comparative genomic and phylogeographic analysis of Mycobacterium leprae.</title>
        <authorList>
            <person name="Monot M."/>
            <person name="Honore N."/>
            <person name="Garnier T."/>
            <person name="Zidane N."/>
            <person name="Sherafi D."/>
            <person name="Paniz-Mondolfi A."/>
            <person name="Matsuoka M."/>
            <person name="Taylor G.M."/>
            <person name="Donoghue H.D."/>
            <person name="Bouwman A."/>
            <person name="Mays S."/>
            <person name="Watson C."/>
            <person name="Lockwood D."/>
            <person name="Khamispour A."/>
            <person name="Dowlati Y."/>
            <person name="Jianping S."/>
            <person name="Rea T.H."/>
            <person name="Vera-Cabrera L."/>
            <person name="Stefani M.M."/>
            <person name="Banu S."/>
            <person name="Macdonald M."/>
            <person name="Sapkota B.R."/>
            <person name="Spencer J.S."/>
            <person name="Thomas J."/>
            <person name="Harshman K."/>
            <person name="Singh P."/>
            <person name="Busso P."/>
            <person name="Gattiker A."/>
            <person name="Rougemont J."/>
            <person name="Brennan P.J."/>
            <person name="Cole S.T."/>
        </authorList>
    </citation>
    <scope>NUCLEOTIDE SEQUENCE [LARGE SCALE GENOMIC DNA]</scope>
    <source>
        <strain>Br4923</strain>
    </source>
</reference>
<dbReference type="EC" id="5.4.2.10" evidence="1"/>
<dbReference type="EMBL" id="FM211192">
    <property type="protein sequence ID" value="CAR70459.1"/>
    <property type="molecule type" value="Genomic_DNA"/>
</dbReference>
<dbReference type="SMR" id="B8ZUC1"/>
<dbReference type="KEGG" id="mlb:MLBr00366"/>
<dbReference type="HOGENOM" id="CLU_016950_7_0_11"/>
<dbReference type="Proteomes" id="UP000006900">
    <property type="component" value="Chromosome"/>
</dbReference>
<dbReference type="GO" id="GO:0005829">
    <property type="term" value="C:cytosol"/>
    <property type="evidence" value="ECO:0007669"/>
    <property type="project" value="TreeGrafter"/>
</dbReference>
<dbReference type="GO" id="GO:0000287">
    <property type="term" value="F:magnesium ion binding"/>
    <property type="evidence" value="ECO:0007669"/>
    <property type="project" value="UniProtKB-UniRule"/>
</dbReference>
<dbReference type="GO" id="GO:0008966">
    <property type="term" value="F:phosphoglucosamine mutase activity"/>
    <property type="evidence" value="ECO:0007669"/>
    <property type="project" value="UniProtKB-UniRule"/>
</dbReference>
<dbReference type="GO" id="GO:0004615">
    <property type="term" value="F:phosphomannomutase activity"/>
    <property type="evidence" value="ECO:0007669"/>
    <property type="project" value="TreeGrafter"/>
</dbReference>
<dbReference type="GO" id="GO:0005975">
    <property type="term" value="P:carbohydrate metabolic process"/>
    <property type="evidence" value="ECO:0007669"/>
    <property type="project" value="InterPro"/>
</dbReference>
<dbReference type="GO" id="GO:0009252">
    <property type="term" value="P:peptidoglycan biosynthetic process"/>
    <property type="evidence" value="ECO:0007669"/>
    <property type="project" value="TreeGrafter"/>
</dbReference>
<dbReference type="GO" id="GO:0006048">
    <property type="term" value="P:UDP-N-acetylglucosamine biosynthetic process"/>
    <property type="evidence" value="ECO:0007669"/>
    <property type="project" value="TreeGrafter"/>
</dbReference>
<dbReference type="CDD" id="cd05802">
    <property type="entry name" value="GlmM"/>
    <property type="match status" value="1"/>
</dbReference>
<dbReference type="FunFam" id="3.30.310.50:FF:000001">
    <property type="entry name" value="Phosphoglucosamine mutase"/>
    <property type="match status" value="1"/>
</dbReference>
<dbReference type="FunFam" id="3.40.120.10:FF:000001">
    <property type="entry name" value="Phosphoglucosamine mutase"/>
    <property type="match status" value="1"/>
</dbReference>
<dbReference type="FunFam" id="3.40.120.10:FF:000002">
    <property type="entry name" value="Phosphoglucosamine mutase"/>
    <property type="match status" value="1"/>
</dbReference>
<dbReference type="Gene3D" id="3.40.120.10">
    <property type="entry name" value="Alpha-D-Glucose-1,6-Bisphosphate, subunit A, domain 3"/>
    <property type="match status" value="3"/>
</dbReference>
<dbReference type="Gene3D" id="3.30.310.50">
    <property type="entry name" value="Alpha-D-phosphohexomutase, C-terminal domain"/>
    <property type="match status" value="1"/>
</dbReference>
<dbReference type="HAMAP" id="MF_01554_B">
    <property type="entry name" value="GlmM_B"/>
    <property type="match status" value="1"/>
</dbReference>
<dbReference type="InterPro" id="IPR005844">
    <property type="entry name" value="A-D-PHexomutase_a/b/a-I"/>
</dbReference>
<dbReference type="InterPro" id="IPR016055">
    <property type="entry name" value="A-D-PHexomutase_a/b/a-I/II/III"/>
</dbReference>
<dbReference type="InterPro" id="IPR005845">
    <property type="entry name" value="A-D-PHexomutase_a/b/a-II"/>
</dbReference>
<dbReference type="InterPro" id="IPR005846">
    <property type="entry name" value="A-D-PHexomutase_a/b/a-III"/>
</dbReference>
<dbReference type="InterPro" id="IPR005843">
    <property type="entry name" value="A-D-PHexomutase_C"/>
</dbReference>
<dbReference type="InterPro" id="IPR036900">
    <property type="entry name" value="A-D-PHexomutase_C_sf"/>
</dbReference>
<dbReference type="InterPro" id="IPR016066">
    <property type="entry name" value="A-D-PHexomutase_CS"/>
</dbReference>
<dbReference type="InterPro" id="IPR005841">
    <property type="entry name" value="Alpha-D-phosphohexomutase_SF"/>
</dbReference>
<dbReference type="InterPro" id="IPR006352">
    <property type="entry name" value="GlmM_bact"/>
</dbReference>
<dbReference type="InterPro" id="IPR050060">
    <property type="entry name" value="Phosphoglucosamine_mutase"/>
</dbReference>
<dbReference type="NCBIfam" id="TIGR01455">
    <property type="entry name" value="glmM"/>
    <property type="match status" value="1"/>
</dbReference>
<dbReference type="PANTHER" id="PTHR42946:SF1">
    <property type="entry name" value="PHOSPHOGLUCOMUTASE (ALPHA-D-GLUCOSE-1,6-BISPHOSPHATE-DEPENDENT)"/>
    <property type="match status" value="1"/>
</dbReference>
<dbReference type="PANTHER" id="PTHR42946">
    <property type="entry name" value="PHOSPHOHEXOSE MUTASE"/>
    <property type="match status" value="1"/>
</dbReference>
<dbReference type="Pfam" id="PF02878">
    <property type="entry name" value="PGM_PMM_I"/>
    <property type="match status" value="1"/>
</dbReference>
<dbReference type="Pfam" id="PF02879">
    <property type="entry name" value="PGM_PMM_II"/>
    <property type="match status" value="1"/>
</dbReference>
<dbReference type="Pfam" id="PF02880">
    <property type="entry name" value="PGM_PMM_III"/>
    <property type="match status" value="1"/>
</dbReference>
<dbReference type="Pfam" id="PF00408">
    <property type="entry name" value="PGM_PMM_IV"/>
    <property type="match status" value="1"/>
</dbReference>
<dbReference type="PRINTS" id="PR00509">
    <property type="entry name" value="PGMPMM"/>
</dbReference>
<dbReference type="SUPFAM" id="SSF55957">
    <property type="entry name" value="Phosphoglucomutase, C-terminal domain"/>
    <property type="match status" value="1"/>
</dbReference>
<dbReference type="SUPFAM" id="SSF53738">
    <property type="entry name" value="Phosphoglucomutase, first 3 domains"/>
    <property type="match status" value="3"/>
</dbReference>
<dbReference type="PROSITE" id="PS00710">
    <property type="entry name" value="PGM_PMM"/>
    <property type="match status" value="1"/>
</dbReference>
<sequence length="463" mass="47644">MGRLFGTDGVRGVANRELTPELVLALGAAAARCLANSGEPGRRVAVIGRDPRASGEMLEAAVIAGLTSAGVDALRVGVLPTPAVAYLTGAYDADFGVMISASHNPMVDNGIKIFGPGGHKLDDDTEDQIEDLVTGGPGLRPAGVAIGRVIDAEDATERYLRHVGKASTIRLDGLTVVVDCAHGAASSAAPRAYRAAGARVIAINADPNGININDRCGSTDLGSLRSAVLAHRADLGLAHDGDADRCLAVDANGDLVDGDAIMVVLALAMQEAGELSSNTLVTTVMSNLGLHLAMRSVGVIVRTTDVGDRYVLEELRAGDFSLGGEQSGHIVMPALGSTGDGIITGLRLMTRMVQTSSSLAALASAMRALPQVLINVEVADKTTAAAAPLVQTAVETAEVELGNTGRILLRPSGTEPMIRVMVEAAEEDVAHRVATRVAAAVSAQGSPLRCWNPDAISGVELRL</sequence>
<comment type="function">
    <text evidence="1">Catalyzes the conversion of glucosamine-6-phosphate to glucosamine-1-phosphate.</text>
</comment>
<comment type="catalytic activity">
    <reaction evidence="1">
        <text>alpha-D-glucosamine 1-phosphate = D-glucosamine 6-phosphate</text>
        <dbReference type="Rhea" id="RHEA:23424"/>
        <dbReference type="ChEBI" id="CHEBI:58516"/>
        <dbReference type="ChEBI" id="CHEBI:58725"/>
        <dbReference type="EC" id="5.4.2.10"/>
    </reaction>
</comment>
<comment type="cofactor">
    <cofactor evidence="1">
        <name>Mg(2+)</name>
        <dbReference type="ChEBI" id="CHEBI:18420"/>
    </cofactor>
    <text evidence="1">Binds 1 Mg(2+) ion per subunit.</text>
</comment>
<comment type="PTM">
    <text evidence="1">Activated by phosphorylation.</text>
</comment>
<comment type="similarity">
    <text evidence="1">Belongs to the phosphohexose mutase family.</text>
</comment>
<keyword id="KW-0413">Isomerase</keyword>
<keyword id="KW-0460">Magnesium</keyword>
<keyword id="KW-0479">Metal-binding</keyword>
<keyword id="KW-0597">Phosphoprotein</keyword>
<protein>
    <recommendedName>
        <fullName evidence="1">Phosphoglucosamine mutase</fullName>
        <ecNumber evidence="1">5.4.2.10</ecNumber>
    </recommendedName>
</protein>
<feature type="chain" id="PRO_1000185377" description="Phosphoglucosamine mutase">
    <location>
        <begin position="1"/>
        <end position="463"/>
    </location>
</feature>
<feature type="active site" description="Phosphoserine intermediate" evidence="1">
    <location>
        <position position="102"/>
    </location>
</feature>
<feature type="binding site" description="via phosphate group" evidence="1">
    <location>
        <position position="102"/>
    </location>
    <ligand>
        <name>Mg(2+)</name>
        <dbReference type="ChEBI" id="CHEBI:18420"/>
    </ligand>
</feature>
<feature type="binding site" evidence="1">
    <location>
        <position position="240"/>
    </location>
    <ligand>
        <name>Mg(2+)</name>
        <dbReference type="ChEBI" id="CHEBI:18420"/>
    </ligand>
</feature>
<feature type="binding site" evidence="1">
    <location>
        <position position="242"/>
    </location>
    <ligand>
        <name>Mg(2+)</name>
        <dbReference type="ChEBI" id="CHEBI:18420"/>
    </ligand>
</feature>
<feature type="binding site" evidence="1">
    <location>
        <position position="244"/>
    </location>
    <ligand>
        <name>Mg(2+)</name>
        <dbReference type="ChEBI" id="CHEBI:18420"/>
    </ligand>
</feature>
<feature type="modified residue" description="Phosphoserine" evidence="1">
    <location>
        <position position="102"/>
    </location>
</feature>
<proteinExistence type="inferred from homology"/>